<proteinExistence type="evidence at protein level"/>
<gene>
    <name evidence="4" type="primary">glyE</name>
    <name type="ordered locus">SP_1766</name>
</gene>
<sequence>MRNTKRAVVFAGDYAYIRQIETAMKSLCRHNSHLKIYLLNQDIPQEWFSQIRIYLQEMGGDLIDCKLIGSQFQMNWSNKLPHINHMTFARYFIPDFVTEDKVLYLDSDLIVTGDLTDLFELDLGENYLAAARSCFGAGVGFNAGVLLINNKKWGSETIRQKLIDLTEKEHENVEEGDQSILNMLFKDQYSSLEDQYNFQIGYDYGAATFKHQFIFDIPLEPLPLILHYISQDKPWNQFSVGRLREVWWEYSLMDWSVILNEWFSKSVKYPSKSQIFKLQCVNLTNSWCVEKIDYLAEQLPEVHFHIVAYTNMANELLALTRFPNVTVYPNSLPMLLEQIVIASDLYLDLNHDRKLEDAYEFVLKYKKPMIAFDNTCSENLSEISYEGIYPSSIPKKMVAAIRSYMR</sequence>
<accession>A0A0H2URJ6</accession>
<evidence type="ECO:0000269" key="1">
    <source>
    </source>
</evidence>
<evidence type="ECO:0000303" key="2">
    <source>
    </source>
</evidence>
<evidence type="ECO:0000303" key="3">
    <source>
    </source>
</evidence>
<evidence type="ECO:0000303" key="4">
    <source>
    </source>
</evidence>
<evidence type="ECO:0000305" key="5"/>
<evidence type="ECO:0000305" key="6">
    <source>
    </source>
</evidence>
<evidence type="ECO:0007744" key="7">
    <source>
        <dbReference type="PDB" id="5GVV"/>
    </source>
</evidence>
<evidence type="ECO:0007744" key="8">
    <source>
        <dbReference type="PDB" id="5GVW"/>
    </source>
</evidence>
<feature type="chain" id="PRO_0000447028" description="Glycosyltransferase GlyE">
    <location>
        <begin position="1"/>
        <end position="406"/>
    </location>
</feature>
<feature type="region of interest" description="GT8 domain" evidence="1">
    <location>
        <begin position="3"/>
        <end position="265"/>
    </location>
</feature>
<feature type="binding site" evidence="1">
    <location>
        <begin position="11"/>
        <end position="16"/>
    </location>
    <ligand>
        <name>UDP</name>
        <dbReference type="ChEBI" id="CHEBI:58223"/>
    </ligand>
</feature>
<feature type="binding site" evidence="1">
    <location>
        <begin position="106"/>
        <end position="107"/>
    </location>
    <ligand>
        <name>UDP</name>
        <dbReference type="ChEBI" id="CHEBI:58223"/>
    </ligand>
</feature>
<feature type="binding site" evidence="1">
    <location>
        <position position="106"/>
    </location>
    <ligand>
        <name>Mn(2+)</name>
        <dbReference type="ChEBI" id="CHEBI:29035"/>
    </ligand>
</feature>
<feature type="binding site" evidence="1">
    <location>
        <position position="108"/>
    </location>
    <ligand>
        <name>Mn(2+)</name>
        <dbReference type="ChEBI" id="CHEBI:29035"/>
    </ligand>
</feature>
<feature type="binding site" evidence="1">
    <location>
        <begin position="227"/>
        <end position="233"/>
    </location>
    <ligand>
        <name>UDP</name>
        <dbReference type="ChEBI" id="CHEBI:58223"/>
    </ligand>
</feature>
<feature type="binding site" evidence="1">
    <location>
        <position position="227"/>
    </location>
    <ligand>
        <name>Mn(2+)</name>
        <dbReference type="ChEBI" id="CHEBI:29035"/>
    </ligand>
</feature>
<feature type="mutagenesis site" description="Loss of UDP-galactose hydrolysis." evidence="1">
    <original>R</original>
    <variation>A</variation>
    <location>
        <position position="90"/>
    </location>
</feature>
<feature type="mutagenesis site" description="Loss of UDP-galactose hydrolysis." evidence="1">
    <original>D</original>
    <variation>A</variation>
    <location>
        <position position="106"/>
    </location>
</feature>
<feature type="mutagenesis site" description="Loss of UDP-galactose hydrolysis." evidence="1">
    <original>D</original>
    <variation>A</variation>
    <location>
        <position position="108"/>
    </location>
</feature>
<feature type="mutagenesis site" description="Loss of UDP-galactose hydrolysis." evidence="1">
    <original>D</original>
    <variation>A</variation>
    <location>
        <position position="177"/>
    </location>
</feature>
<feature type="mutagenesis site" description="Loss of UDP-galactose hydrolysis." evidence="1">
    <original>Q</original>
    <variation>A</variation>
    <location>
        <position position="178"/>
    </location>
</feature>
<feature type="mutagenesis site" description="Significantly decreased glycosyltransferase activity." evidence="1">
    <original>NSW</original>
    <variation>ASA</variation>
    <location>
        <begin position="285"/>
        <end position="287"/>
    </location>
</feature>
<feature type="mutagenesis site" description="Decreased glycosyltransferase activity." evidence="1">
    <original>NMA</original>
    <variation>AMR</variation>
    <location>
        <begin position="311"/>
        <end position="313"/>
    </location>
</feature>
<dbReference type="EMBL" id="AE005672">
    <property type="protein sequence ID" value="AAK75841.1"/>
    <property type="molecule type" value="Genomic_DNA"/>
</dbReference>
<dbReference type="RefSeq" id="WP_001808456.1">
    <property type="nucleotide sequence ID" value="NC_003028.3"/>
</dbReference>
<dbReference type="PDB" id="5GVV">
    <property type="method" value="X-ray"/>
    <property type="resolution" value="1.95 A"/>
    <property type="chains" value="A/F=3-406"/>
</dbReference>
<dbReference type="PDB" id="5GVW">
    <property type="method" value="X-ray"/>
    <property type="resolution" value="2.40 A"/>
    <property type="chains" value="A/B/C/D=3-406"/>
</dbReference>
<dbReference type="PDBsum" id="5GVV"/>
<dbReference type="PDBsum" id="5GVW"/>
<dbReference type="SMR" id="A0A0H2URJ6"/>
<dbReference type="PaxDb" id="170187-SP_1766"/>
<dbReference type="EnsemblBacteria" id="AAK75841">
    <property type="protein sequence ID" value="AAK75841"/>
    <property type="gene ID" value="SP_1766"/>
</dbReference>
<dbReference type="KEGG" id="spn:SP_1766"/>
<dbReference type="eggNOG" id="COG1442">
    <property type="taxonomic scope" value="Bacteria"/>
</dbReference>
<dbReference type="PhylomeDB" id="A0A0H2URJ6"/>
<dbReference type="BioCyc" id="SPNE170187:G1FZB-1791-MONOMER"/>
<dbReference type="UniPathway" id="UPA00378"/>
<dbReference type="Proteomes" id="UP000000585">
    <property type="component" value="Chromosome"/>
</dbReference>
<dbReference type="GO" id="GO:0016757">
    <property type="term" value="F:glycosyltransferase activity"/>
    <property type="evidence" value="ECO:0007669"/>
    <property type="project" value="UniProtKB-KW"/>
</dbReference>
<dbReference type="GO" id="GO:0046872">
    <property type="term" value="F:metal ion binding"/>
    <property type="evidence" value="ECO:0007669"/>
    <property type="project" value="UniProtKB-KW"/>
</dbReference>
<dbReference type="GO" id="GO:0000166">
    <property type="term" value="F:nucleotide binding"/>
    <property type="evidence" value="ECO:0007669"/>
    <property type="project" value="UniProtKB-KW"/>
</dbReference>
<dbReference type="GO" id="GO:0006486">
    <property type="term" value="P:protein glycosylation"/>
    <property type="evidence" value="ECO:0007669"/>
    <property type="project" value="UniProtKB-UniPathway"/>
</dbReference>
<dbReference type="CDD" id="cd04194">
    <property type="entry name" value="GT8_A4GalT_like"/>
    <property type="match status" value="1"/>
</dbReference>
<dbReference type="Gene3D" id="3.90.550.10">
    <property type="entry name" value="Spore Coat Polysaccharide Biosynthesis Protein SpsA, Chain A"/>
    <property type="match status" value="1"/>
</dbReference>
<dbReference type="InterPro" id="IPR002495">
    <property type="entry name" value="Glyco_trans_8"/>
</dbReference>
<dbReference type="InterPro" id="IPR050748">
    <property type="entry name" value="Glycosyltrans_8_dom-fam"/>
</dbReference>
<dbReference type="InterPro" id="IPR029044">
    <property type="entry name" value="Nucleotide-diphossugar_trans"/>
</dbReference>
<dbReference type="PANTHER" id="PTHR13778">
    <property type="entry name" value="GLYCOSYLTRANSFERASE 8 DOMAIN-CONTAINING PROTEIN"/>
    <property type="match status" value="1"/>
</dbReference>
<dbReference type="PANTHER" id="PTHR13778:SF47">
    <property type="entry name" value="LIPOPOLYSACCHARIDE 1,3-GALACTOSYLTRANSFERASE"/>
    <property type="match status" value="1"/>
</dbReference>
<dbReference type="Pfam" id="PF01501">
    <property type="entry name" value="Glyco_transf_8"/>
    <property type="match status" value="1"/>
</dbReference>
<dbReference type="SUPFAM" id="SSF53448">
    <property type="entry name" value="Nucleotide-diphospho-sugar transferases"/>
    <property type="match status" value="1"/>
</dbReference>
<comment type="function">
    <text evidence="1">Involved in the polymorphic O-glycosylation of the serine-rich repeat protein PsrP. Catalyzes the third step in glycosylation of PsrP in this bacteria. Transfers galactose from UDP-galactose to the terminal glucose moiety of already-glycosylated PsrP (using the short substrate PsrP-GlcNAc-Glc). Has a very marked preference for PsrP substrate that has already been modified by GlcNAc and glucose. Has hydrolytic activity against UDP-galactose but none against UDP-glucose.</text>
</comment>
<comment type="function">
    <text evidence="1">Also catalyzes the fourth step in glycosylation of PsrP in this bacteria. Can transfer the sugar from UDP-galactose to the terminal sugar moiety of PsrP-GlcNAc-Glc-Glc and of PsrP-GlcNAc-Glc-Gal.</text>
</comment>
<comment type="cofactor">
    <cofactor evidence="1">
        <name>Mn(2+)</name>
        <dbReference type="ChEBI" id="CHEBI:29035"/>
    </cofactor>
</comment>
<comment type="pathway">
    <text evidence="1">Protein modification; protein glycosylation.</text>
</comment>
<comment type="domain">
    <text evidence="1 6">Has 2 domains, the N-terminal GT8 domain that binds UDP and Mn(2+) and a C-terminal domain that assumes a Rossmann-like fold. The GT8 domain has UDP-galactose hydrolysis activity but no galactose transferase activity (PubMed:28246170). The C-terminal domain probably binds the partially glycosylated protein acceptor in a continuous, surface-exposed groove that can possibly bind proteins with varying degrees of glycosylation (Probable).</text>
</comment>
<comment type="miscellaneous">
    <text evidence="2 3 5">Encoded in RD10, a pathogenicity island with an atypical GC content that is associated with invasive pneumococcal disease. Pathogenicity islands account for greater than half the genomic diversity observed between isolates (PubMed:11463916, PubMed:16861665). The main function of this island seems to be correct synthesis and export of pneumococcal serine-rich repeat protein PsrP (Probable).</text>
</comment>
<comment type="similarity">
    <text evidence="5">In the N-terminal section; belongs to the glycosyltransferase 8 family.</text>
</comment>
<name>GLYE_STRPN</name>
<keyword id="KW-0002">3D-structure</keyword>
<keyword id="KW-0328">Glycosyltransferase</keyword>
<keyword id="KW-0464">Manganese</keyword>
<keyword id="KW-0479">Metal-binding</keyword>
<keyword id="KW-0547">Nucleotide-binding</keyword>
<keyword id="KW-1185">Reference proteome</keyword>
<keyword id="KW-0808">Transferase</keyword>
<reference key="1">
    <citation type="journal article" date="2001" name="Science">
        <title>Complete genome sequence of a virulent isolate of Streptococcus pneumoniae.</title>
        <authorList>
            <person name="Tettelin H."/>
            <person name="Nelson K.E."/>
            <person name="Paulsen I.T."/>
            <person name="Eisen J.A."/>
            <person name="Read T.D."/>
            <person name="Peterson S.N."/>
            <person name="Heidelberg J.F."/>
            <person name="DeBoy R.T."/>
            <person name="Haft D.H."/>
            <person name="Dodson R.J."/>
            <person name="Durkin A.S."/>
            <person name="Gwinn M.L."/>
            <person name="Kolonay J.F."/>
            <person name="Nelson W.C."/>
            <person name="Peterson J.D."/>
            <person name="Umayam L.A."/>
            <person name="White O."/>
            <person name="Salzberg S.L."/>
            <person name="Lewis M.R."/>
            <person name="Radune D."/>
            <person name="Holtzapple E.K."/>
            <person name="Khouri H.M."/>
            <person name="Wolf A.M."/>
            <person name="Utterback T.R."/>
            <person name="Hansen C.L."/>
            <person name="McDonald L.A."/>
            <person name="Feldblyum T.V."/>
            <person name="Angiuoli S.V."/>
            <person name="Dickinson T."/>
            <person name="Hickey E.K."/>
            <person name="Holt I.E."/>
            <person name="Loftus B.J."/>
            <person name="Yang F."/>
            <person name="Smith H.O."/>
            <person name="Venter J.C."/>
            <person name="Dougherty B.A."/>
            <person name="Morrison D.A."/>
            <person name="Hollingshead S.K."/>
            <person name="Fraser C.M."/>
        </authorList>
    </citation>
    <scope>NUCLEOTIDE SEQUENCE [LARGE SCALE GENOMIC DNA]</scope>
    <source>
        <strain>ATCC BAA-334 / TIGR4</strain>
    </source>
</reference>
<reference key="2">
    <citation type="journal article" date="2006" name="Infect. Immun.">
        <title>Identification of a candidate Streptococcus pneumoniae core genome and regions of diversity correlated with invasive pneumococcal disease.</title>
        <authorList>
            <person name="Obert C."/>
            <person name="Sublett J."/>
            <person name="Kaushal D."/>
            <person name="Hinojosa E."/>
            <person name="Barton T."/>
            <person name="Tuomanen E.I."/>
            <person name="Orihuela C.J."/>
        </authorList>
    </citation>
    <scope>DISCUSSION OF SEQUENCE</scope>
    <source>
        <strain>ATCC BAA-334 / TIGR4</strain>
    </source>
</reference>
<reference evidence="7 8" key="3">
    <citation type="journal article" date="2017" name="J. Biol. Chem.">
        <title>Defining the enzymatic pathway for polymorphic O-glycosylation of the pneumococcal serine-rich repeat protein PsrP.</title>
        <authorList>
            <person name="Jiang Y.L."/>
            <person name="Jin H."/>
            <person name="Yang H.B."/>
            <person name="Zhao R.L."/>
            <person name="Wang S."/>
            <person name="Chen Y."/>
            <person name="Zhou C.Z."/>
        </authorList>
    </citation>
    <scope>X-RAY CRYSTALLOGRAPHY (1.95 ANGSTROMS) OF 3-406 IN COMPLEX WITH MANGANESE WITH OR WITHOUT UDP</scope>
    <scope>FUNCTION</scope>
    <scope>COFACTOR</scope>
    <scope>PATHWAY</scope>
    <scope>DOMAIN</scope>
    <scope>MUTAGENESIS OF ARG-90; ASP-106; ASP-108; ASP-177; GLN-178; 285-ASN--TRP-287 AND 311-ASN--ALA-313</scope>
    <source>
        <strain>ATCC BAA-334 / TIGR4</strain>
    </source>
</reference>
<protein>
    <recommendedName>
        <fullName evidence="4">Glycosyltransferase GlyE</fullName>
    </recommendedName>
    <alternativeName>
        <fullName evidence="5">PsrP glycosyltransferase GlyE</fullName>
    </alternativeName>
</protein>
<organism>
    <name type="scientific">Streptococcus pneumoniae serotype 4 (strain ATCC BAA-334 / TIGR4)</name>
    <dbReference type="NCBI Taxonomy" id="170187"/>
    <lineage>
        <taxon>Bacteria</taxon>
        <taxon>Bacillati</taxon>
        <taxon>Bacillota</taxon>
        <taxon>Bacilli</taxon>
        <taxon>Lactobacillales</taxon>
        <taxon>Streptococcaceae</taxon>
        <taxon>Streptococcus</taxon>
    </lineage>
</organism>